<organism>
    <name type="scientific">Rickettsia felis (strain ATCC VR-1525 / URRWXCal2)</name>
    <name type="common">Rickettsia azadi</name>
    <dbReference type="NCBI Taxonomy" id="315456"/>
    <lineage>
        <taxon>Bacteria</taxon>
        <taxon>Pseudomonadati</taxon>
        <taxon>Pseudomonadota</taxon>
        <taxon>Alphaproteobacteria</taxon>
        <taxon>Rickettsiales</taxon>
        <taxon>Rickettsiaceae</taxon>
        <taxon>Rickettsieae</taxon>
        <taxon>Rickettsia</taxon>
        <taxon>spotted fever group</taxon>
    </lineage>
</organism>
<sequence length="124" mass="13943">MKRIIKKDQSSVINYINDQKLLHLAIRAGYKNIVEYLLKKGANPNIQNNNGETTLHFAAMNGCVRTIECLIKSGAIIDSFDKFERTPLELAINSGNTDAVKLFLQYEATIGNTLNQYLNILVKN</sequence>
<protein>
    <recommendedName>
        <fullName>Putative ankyrin repeat protein RF_1087</fullName>
    </recommendedName>
</protein>
<accession>Q4UKJ3</accession>
<reference key="1">
    <citation type="journal article" date="2005" name="PLoS Biol.">
        <title>The genome sequence of Rickettsia felis identifies the first putative conjugative plasmid in an obligate intracellular parasite.</title>
        <authorList>
            <person name="Ogata H."/>
            <person name="Renesto P."/>
            <person name="Audic S."/>
            <person name="Robert C."/>
            <person name="Blanc G."/>
            <person name="Fournier P.-E."/>
            <person name="Parinello H."/>
            <person name="Claverie J.-M."/>
            <person name="Raoult D."/>
        </authorList>
    </citation>
    <scope>NUCLEOTIDE SEQUENCE [LARGE SCALE GENOMIC DNA]</scope>
    <source>
        <strain>ATCC VR-1525 / URRWXCal2</strain>
    </source>
</reference>
<feature type="chain" id="PRO_0000281759" description="Putative ankyrin repeat protein RF_1087">
    <location>
        <begin position="1"/>
        <end position="124"/>
    </location>
</feature>
<feature type="repeat" description="ANK 1">
    <location>
        <begin position="17"/>
        <end position="46"/>
    </location>
</feature>
<feature type="repeat" description="ANK 2">
    <location>
        <begin position="50"/>
        <end position="79"/>
    </location>
</feature>
<feature type="repeat" description="ANK 3">
    <location>
        <begin position="83"/>
        <end position="112"/>
    </location>
</feature>
<gene>
    <name type="ordered locus">RF_1087</name>
</gene>
<proteinExistence type="predicted"/>
<dbReference type="EMBL" id="CP000053">
    <property type="protein sequence ID" value="AAY61938.1"/>
    <property type="molecule type" value="Genomic_DNA"/>
</dbReference>
<dbReference type="SMR" id="Q4UKJ3"/>
<dbReference type="STRING" id="315456.RF_1087"/>
<dbReference type="KEGG" id="rfe:RF_1087"/>
<dbReference type="eggNOG" id="COG0666">
    <property type="taxonomic scope" value="Bacteria"/>
</dbReference>
<dbReference type="HOGENOM" id="CLU_000134_45_8_5"/>
<dbReference type="OrthoDB" id="7164012at2"/>
<dbReference type="Proteomes" id="UP000008548">
    <property type="component" value="Chromosome"/>
</dbReference>
<dbReference type="Gene3D" id="1.25.40.20">
    <property type="entry name" value="Ankyrin repeat-containing domain"/>
    <property type="match status" value="1"/>
</dbReference>
<dbReference type="InterPro" id="IPR002110">
    <property type="entry name" value="Ankyrin_rpt"/>
</dbReference>
<dbReference type="InterPro" id="IPR036770">
    <property type="entry name" value="Ankyrin_rpt-contain_sf"/>
</dbReference>
<dbReference type="PANTHER" id="PTHR24198">
    <property type="entry name" value="ANKYRIN REPEAT AND PROTEIN KINASE DOMAIN-CONTAINING PROTEIN"/>
    <property type="match status" value="1"/>
</dbReference>
<dbReference type="PANTHER" id="PTHR24198:SF165">
    <property type="entry name" value="ANKYRIN REPEAT-CONTAINING PROTEIN-RELATED"/>
    <property type="match status" value="1"/>
</dbReference>
<dbReference type="Pfam" id="PF12796">
    <property type="entry name" value="Ank_2"/>
    <property type="match status" value="1"/>
</dbReference>
<dbReference type="SMART" id="SM00248">
    <property type="entry name" value="ANK"/>
    <property type="match status" value="3"/>
</dbReference>
<dbReference type="SUPFAM" id="SSF48403">
    <property type="entry name" value="Ankyrin repeat"/>
    <property type="match status" value="1"/>
</dbReference>
<dbReference type="PROSITE" id="PS50297">
    <property type="entry name" value="ANK_REP_REGION"/>
    <property type="match status" value="1"/>
</dbReference>
<dbReference type="PROSITE" id="PS50088">
    <property type="entry name" value="ANK_REPEAT"/>
    <property type="match status" value="2"/>
</dbReference>
<name>Y1087_RICFE</name>
<keyword id="KW-0040">ANK repeat</keyword>
<keyword id="KW-0677">Repeat</keyword>